<evidence type="ECO:0000255" key="1">
    <source>
        <dbReference type="HAMAP-Rule" id="MF_00367"/>
    </source>
</evidence>
<evidence type="ECO:0000255" key="2">
    <source>
        <dbReference type="PROSITE-ProRule" id="PRU01050"/>
    </source>
</evidence>
<sequence length="300" mass="33896">MTDTNATRCGYVAIVGRPNVGKSTLLNHILGQKLAITSRKPQTTRHNMLGIKTEGDVQAIYVDTPGMHKGGEKALNRYMNKTASAALKDVDVVIFVVDRTKWTEEDQMVLERVQYVTGPLIVALNKTDRIEDKAELMPHLSWLQEQLPNAQIIPISAQQGHNLDALEKVIADHLPENDHFFPEDQITDRSSRFLAAELVREKIMRQLGAELPYQITVEIEEFKQQGATLHIHALILVERDGQKKIIIGDKGERIKRIGTEARKDMELLFDSKIMLNLWVKVKGGWSDDERALRSLGYGDL</sequence>
<feature type="chain" id="PRO_1000079724" description="GTPase Era">
    <location>
        <begin position="1"/>
        <end position="300"/>
    </location>
</feature>
<feature type="domain" description="Era-type G" evidence="2">
    <location>
        <begin position="8"/>
        <end position="176"/>
    </location>
</feature>
<feature type="domain" description="KH type-2" evidence="1">
    <location>
        <begin position="199"/>
        <end position="283"/>
    </location>
</feature>
<feature type="region of interest" description="G1" evidence="2">
    <location>
        <begin position="16"/>
        <end position="23"/>
    </location>
</feature>
<feature type="region of interest" description="G2" evidence="2">
    <location>
        <begin position="42"/>
        <end position="46"/>
    </location>
</feature>
<feature type="region of interest" description="G3" evidence="2">
    <location>
        <begin position="63"/>
        <end position="66"/>
    </location>
</feature>
<feature type="region of interest" description="G4" evidence="2">
    <location>
        <begin position="125"/>
        <end position="128"/>
    </location>
</feature>
<feature type="region of interest" description="G5" evidence="2">
    <location>
        <begin position="155"/>
        <end position="157"/>
    </location>
</feature>
<feature type="binding site" evidence="1">
    <location>
        <begin position="16"/>
        <end position="23"/>
    </location>
    <ligand>
        <name>GTP</name>
        <dbReference type="ChEBI" id="CHEBI:37565"/>
    </ligand>
</feature>
<feature type="binding site" evidence="1">
    <location>
        <begin position="63"/>
        <end position="67"/>
    </location>
    <ligand>
        <name>GTP</name>
        <dbReference type="ChEBI" id="CHEBI:37565"/>
    </ligand>
</feature>
<feature type="binding site" evidence="1">
    <location>
        <begin position="125"/>
        <end position="128"/>
    </location>
    <ligand>
        <name>GTP</name>
        <dbReference type="ChEBI" id="CHEBI:37565"/>
    </ligand>
</feature>
<comment type="function">
    <text evidence="1">An essential GTPase that binds both GDP and GTP, with rapid nucleotide exchange. Plays a role in 16S rRNA processing and 30S ribosomal subunit biogenesis and possibly also in cell cycle regulation and energy metabolism.</text>
</comment>
<comment type="subunit">
    <text evidence="1">Monomer.</text>
</comment>
<comment type="subcellular location">
    <subcellularLocation>
        <location>Cytoplasm</location>
    </subcellularLocation>
    <subcellularLocation>
        <location evidence="1">Cell inner membrane</location>
        <topology evidence="1">Peripheral membrane protein</topology>
    </subcellularLocation>
</comment>
<comment type="similarity">
    <text evidence="1 2">Belongs to the TRAFAC class TrmE-Era-EngA-EngB-Septin-like GTPase superfamily. Era GTPase family.</text>
</comment>
<keyword id="KW-0997">Cell inner membrane</keyword>
<keyword id="KW-1003">Cell membrane</keyword>
<keyword id="KW-0963">Cytoplasm</keyword>
<keyword id="KW-0342">GTP-binding</keyword>
<keyword id="KW-0472">Membrane</keyword>
<keyword id="KW-0547">Nucleotide-binding</keyword>
<keyword id="KW-0690">Ribosome biogenesis</keyword>
<keyword id="KW-0694">RNA-binding</keyword>
<keyword id="KW-0699">rRNA-binding</keyword>
<proteinExistence type="inferred from homology"/>
<organism>
    <name type="scientific">Pseudomonas fluorescens (strain Pf0-1)</name>
    <dbReference type="NCBI Taxonomy" id="205922"/>
    <lineage>
        <taxon>Bacteria</taxon>
        <taxon>Pseudomonadati</taxon>
        <taxon>Pseudomonadota</taxon>
        <taxon>Gammaproteobacteria</taxon>
        <taxon>Pseudomonadales</taxon>
        <taxon>Pseudomonadaceae</taxon>
        <taxon>Pseudomonas</taxon>
    </lineage>
</organism>
<dbReference type="EMBL" id="CP000094">
    <property type="protein sequence ID" value="ABA72738.1"/>
    <property type="molecule type" value="Genomic_DNA"/>
</dbReference>
<dbReference type="RefSeq" id="WP_011332590.1">
    <property type="nucleotide sequence ID" value="NC_007492.2"/>
</dbReference>
<dbReference type="SMR" id="Q3KHL8"/>
<dbReference type="KEGG" id="pfo:Pfl01_0995"/>
<dbReference type="eggNOG" id="COG1159">
    <property type="taxonomic scope" value="Bacteria"/>
</dbReference>
<dbReference type="HOGENOM" id="CLU_038009_1_2_6"/>
<dbReference type="Proteomes" id="UP000002704">
    <property type="component" value="Chromosome"/>
</dbReference>
<dbReference type="GO" id="GO:0005829">
    <property type="term" value="C:cytosol"/>
    <property type="evidence" value="ECO:0007669"/>
    <property type="project" value="TreeGrafter"/>
</dbReference>
<dbReference type="GO" id="GO:0005886">
    <property type="term" value="C:plasma membrane"/>
    <property type="evidence" value="ECO:0007669"/>
    <property type="project" value="UniProtKB-SubCell"/>
</dbReference>
<dbReference type="GO" id="GO:0005525">
    <property type="term" value="F:GTP binding"/>
    <property type="evidence" value="ECO:0007669"/>
    <property type="project" value="UniProtKB-UniRule"/>
</dbReference>
<dbReference type="GO" id="GO:0003924">
    <property type="term" value="F:GTPase activity"/>
    <property type="evidence" value="ECO:0007669"/>
    <property type="project" value="UniProtKB-UniRule"/>
</dbReference>
<dbReference type="GO" id="GO:0043024">
    <property type="term" value="F:ribosomal small subunit binding"/>
    <property type="evidence" value="ECO:0007669"/>
    <property type="project" value="TreeGrafter"/>
</dbReference>
<dbReference type="GO" id="GO:0070181">
    <property type="term" value="F:small ribosomal subunit rRNA binding"/>
    <property type="evidence" value="ECO:0007669"/>
    <property type="project" value="UniProtKB-UniRule"/>
</dbReference>
<dbReference type="GO" id="GO:0000028">
    <property type="term" value="P:ribosomal small subunit assembly"/>
    <property type="evidence" value="ECO:0007669"/>
    <property type="project" value="TreeGrafter"/>
</dbReference>
<dbReference type="CDD" id="cd04163">
    <property type="entry name" value="Era"/>
    <property type="match status" value="1"/>
</dbReference>
<dbReference type="CDD" id="cd22534">
    <property type="entry name" value="KH-II_Era"/>
    <property type="match status" value="1"/>
</dbReference>
<dbReference type="FunFam" id="3.30.300.20:FF:000003">
    <property type="entry name" value="GTPase Era"/>
    <property type="match status" value="1"/>
</dbReference>
<dbReference type="FunFam" id="3.40.50.300:FF:000094">
    <property type="entry name" value="GTPase Era"/>
    <property type="match status" value="1"/>
</dbReference>
<dbReference type="Gene3D" id="3.30.300.20">
    <property type="match status" value="1"/>
</dbReference>
<dbReference type="Gene3D" id="3.40.50.300">
    <property type="entry name" value="P-loop containing nucleotide triphosphate hydrolases"/>
    <property type="match status" value="1"/>
</dbReference>
<dbReference type="HAMAP" id="MF_00367">
    <property type="entry name" value="GTPase_Era"/>
    <property type="match status" value="1"/>
</dbReference>
<dbReference type="InterPro" id="IPR030388">
    <property type="entry name" value="G_ERA_dom"/>
</dbReference>
<dbReference type="InterPro" id="IPR006073">
    <property type="entry name" value="GTP-bd"/>
</dbReference>
<dbReference type="InterPro" id="IPR005662">
    <property type="entry name" value="GTPase_Era-like"/>
</dbReference>
<dbReference type="InterPro" id="IPR015946">
    <property type="entry name" value="KH_dom-like_a/b"/>
</dbReference>
<dbReference type="InterPro" id="IPR004044">
    <property type="entry name" value="KH_dom_type_2"/>
</dbReference>
<dbReference type="InterPro" id="IPR009019">
    <property type="entry name" value="KH_sf_prok-type"/>
</dbReference>
<dbReference type="InterPro" id="IPR027417">
    <property type="entry name" value="P-loop_NTPase"/>
</dbReference>
<dbReference type="InterPro" id="IPR005225">
    <property type="entry name" value="Small_GTP-bd"/>
</dbReference>
<dbReference type="NCBIfam" id="TIGR00436">
    <property type="entry name" value="era"/>
    <property type="match status" value="1"/>
</dbReference>
<dbReference type="NCBIfam" id="NF000908">
    <property type="entry name" value="PRK00089.1"/>
    <property type="match status" value="1"/>
</dbReference>
<dbReference type="NCBIfam" id="TIGR00231">
    <property type="entry name" value="small_GTP"/>
    <property type="match status" value="1"/>
</dbReference>
<dbReference type="PANTHER" id="PTHR42698">
    <property type="entry name" value="GTPASE ERA"/>
    <property type="match status" value="1"/>
</dbReference>
<dbReference type="PANTHER" id="PTHR42698:SF1">
    <property type="entry name" value="GTPASE ERA, MITOCHONDRIAL"/>
    <property type="match status" value="1"/>
</dbReference>
<dbReference type="Pfam" id="PF07650">
    <property type="entry name" value="KH_2"/>
    <property type="match status" value="1"/>
</dbReference>
<dbReference type="Pfam" id="PF01926">
    <property type="entry name" value="MMR_HSR1"/>
    <property type="match status" value="1"/>
</dbReference>
<dbReference type="PRINTS" id="PR00326">
    <property type="entry name" value="GTP1OBG"/>
</dbReference>
<dbReference type="SUPFAM" id="SSF52540">
    <property type="entry name" value="P-loop containing nucleoside triphosphate hydrolases"/>
    <property type="match status" value="1"/>
</dbReference>
<dbReference type="SUPFAM" id="SSF54814">
    <property type="entry name" value="Prokaryotic type KH domain (KH-domain type II)"/>
    <property type="match status" value="1"/>
</dbReference>
<dbReference type="PROSITE" id="PS51713">
    <property type="entry name" value="G_ERA"/>
    <property type="match status" value="1"/>
</dbReference>
<dbReference type="PROSITE" id="PS50823">
    <property type="entry name" value="KH_TYPE_2"/>
    <property type="match status" value="1"/>
</dbReference>
<name>ERA_PSEPF</name>
<reference key="1">
    <citation type="journal article" date="2009" name="Genome Biol.">
        <title>Genomic and genetic analyses of diversity and plant interactions of Pseudomonas fluorescens.</title>
        <authorList>
            <person name="Silby M.W."/>
            <person name="Cerdeno-Tarraga A.M."/>
            <person name="Vernikos G.S."/>
            <person name="Giddens S.R."/>
            <person name="Jackson R.W."/>
            <person name="Preston G.M."/>
            <person name="Zhang X.-X."/>
            <person name="Moon C.D."/>
            <person name="Gehrig S.M."/>
            <person name="Godfrey S.A.C."/>
            <person name="Knight C.G."/>
            <person name="Malone J.G."/>
            <person name="Robinson Z."/>
            <person name="Spiers A.J."/>
            <person name="Harris S."/>
            <person name="Challis G.L."/>
            <person name="Yaxley A.M."/>
            <person name="Harris D."/>
            <person name="Seeger K."/>
            <person name="Murphy L."/>
            <person name="Rutter S."/>
            <person name="Squares R."/>
            <person name="Quail M.A."/>
            <person name="Saunders E."/>
            <person name="Mavromatis K."/>
            <person name="Brettin T.S."/>
            <person name="Bentley S.D."/>
            <person name="Hothersall J."/>
            <person name="Stephens E."/>
            <person name="Thomas C.M."/>
            <person name="Parkhill J."/>
            <person name="Levy S.B."/>
            <person name="Rainey P.B."/>
            <person name="Thomson N.R."/>
        </authorList>
    </citation>
    <scope>NUCLEOTIDE SEQUENCE [LARGE SCALE GENOMIC DNA]</scope>
    <source>
        <strain>Pf0-1</strain>
    </source>
</reference>
<gene>
    <name evidence="1" type="primary">era</name>
    <name type="ordered locus">Pfl01_0995</name>
</gene>
<protein>
    <recommendedName>
        <fullName evidence="1">GTPase Era</fullName>
    </recommendedName>
</protein>
<accession>Q3KHL8</accession>